<evidence type="ECO:0000255" key="1">
    <source>
        <dbReference type="HAMAP-Rule" id="MF_01543"/>
    </source>
</evidence>
<feature type="chain" id="PRO_1000068788" description="Formate--tetrahydrofolate ligase">
    <location>
        <begin position="1"/>
        <end position="556"/>
    </location>
</feature>
<feature type="binding site" evidence="1">
    <location>
        <begin position="65"/>
        <end position="72"/>
    </location>
    <ligand>
        <name>ATP</name>
        <dbReference type="ChEBI" id="CHEBI:30616"/>
    </ligand>
</feature>
<reference key="1">
    <citation type="submission" date="2007-10" db="EMBL/GenBank/DDBJ databases">
        <title>Complete genome of Alkaliphilus oremlandii OhILAs.</title>
        <authorList>
            <person name="Copeland A."/>
            <person name="Lucas S."/>
            <person name="Lapidus A."/>
            <person name="Barry K."/>
            <person name="Detter J.C."/>
            <person name="Glavina del Rio T."/>
            <person name="Hammon N."/>
            <person name="Israni S."/>
            <person name="Dalin E."/>
            <person name="Tice H."/>
            <person name="Pitluck S."/>
            <person name="Chain P."/>
            <person name="Malfatti S."/>
            <person name="Shin M."/>
            <person name="Vergez L."/>
            <person name="Schmutz J."/>
            <person name="Larimer F."/>
            <person name="Land M."/>
            <person name="Hauser L."/>
            <person name="Kyrpides N."/>
            <person name="Mikhailova N."/>
            <person name="Stolz J.F."/>
            <person name="Dawson A."/>
            <person name="Fisher E."/>
            <person name="Crable B."/>
            <person name="Perera E."/>
            <person name="Lisak J."/>
            <person name="Ranganathan M."/>
            <person name="Basu P."/>
            <person name="Richardson P."/>
        </authorList>
    </citation>
    <scope>NUCLEOTIDE SEQUENCE [LARGE SCALE GENOMIC DNA]</scope>
    <source>
        <strain>OhILAs</strain>
    </source>
</reference>
<proteinExistence type="inferred from homology"/>
<name>FTHS_ALKOO</name>
<dbReference type="EC" id="6.3.4.3" evidence="1"/>
<dbReference type="EMBL" id="CP000853">
    <property type="protein sequence ID" value="ABW19663.1"/>
    <property type="molecule type" value="Genomic_DNA"/>
</dbReference>
<dbReference type="RefSeq" id="WP_012159972.1">
    <property type="nucleotide sequence ID" value="NC_009922.1"/>
</dbReference>
<dbReference type="SMR" id="A8MIN1"/>
<dbReference type="STRING" id="350688.Clos_2127"/>
<dbReference type="KEGG" id="aoe:Clos_2127"/>
<dbReference type="eggNOG" id="COG2759">
    <property type="taxonomic scope" value="Bacteria"/>
</dbReference>
<dbReference type="HOGENOM" id="CLU_003601_3_3_9"/>
<dbReference type="OrthoDB" id="9761733at2"/>
<dbReference type="UniPathway" id="UPA00193"/>
<dbReference type="Proteomes" id="UP000000269">
    <property type="component" value="Chromosome"/>
</dbReference>
<dbReference type="GO" id="GO:0005524">
    <property type="term" value="F:ATP binding"/>
    <property type="evidence" value="ECO:0007669"/>
    <property type="project" value="UniProtKB-UniRule"/>
</dbReference>
<dbReference type="GO" id="GO:0004329">
    <property type="term" value="F:formate-tetrahydrofolate ligase activity"/>
    <property type="evidence" value="ECO:0007669"/>
    <property type="project" value="UniProtKB-UniRule"/>
</dbReference>
<dbReference type="GO" id="GO:0035999">
    <property type="term" value="P:tetrahydrofolate interconversion"/>
    <property type="evidence" value="ECO:0007669"/>
    <property type="project" value="UniProtKB-UniRule"/>
</dbReference>
<dbReference type="CDD" id="cd00477">
    <property type="entry name" value="FTHFS"/>
    <property type="match status" value="1"/>
</dbReference>
<dbReference type="FunFam" id="3.30.1510.10:FF:000001">
    <property type="entry name" value="Formate--tetrahydrofolate ligase"/>
    <property type="match status" value="1"/>
</dbReference>
<dbReference type="FunFam" id="3.10.410.10:FF:000001">
    <property type="entry name" value="Putative formate--tetrahydrofolate ligase"/>
    <property type="match status" value="1"/>
</dbReference>
<dbReference type="Gene3D" id="3.30.1510.10">
    <property type="entry name" value="Domain 2, N(10)-formyltetrahydrofolate synthetase"/>
    <property type="match status" value="1"/>
</dbReference>
<dbReference type="Gene3D" id="3.10.410.10">
    <property type="entry name" value="Formyltetrahydrofolate synthetase, domain 3"/>
    <property type="match status" value="1"/>
</dbReference>
<dbReference type="Gene3D" id="3.40.50.300">
    <property type="entry name" value="P-loop containing nucleotide triphosphate hydrolases"/>
    <property type="match status" value="1"/>
</dbReference>
<dbReference type="HAMAP" id="MF_01543">
    <property type="entry name" value="FTHFS"/>
    <property type="match status" value="1"/>
</dbReference>
<dbReference type="InterPro" id="IPR000559">
    <property type="entry name" value="Formate_THF_ligase"/>
</dbReference>
<dbReference type="InterPro" id="IPR020628">
    <property type="entry name" value="Formate_THF_ligase_CS"/>
</dbReference>
<dbReference type="InterPro" id="IPR027417">
    <property type="entry name" value="P-loop_NTPase"/>
</dbReference>
<dbReference type="NCBIfam" id="NF010030">
    <property type="entry name" value="PRK13505.1"/>
    <property type="match status" value="1"/>
</dbReference>
<dbReference type="Pfam" id="PF01268">
    <property type="entry name" value="FTHFS"/>
    <property type="match status" value="1"/>
</dbReference>
<dbReference type="SUPFAM" id="SSF52540">
    <property type="entry name" value="P-loop containing nucleoside triphosphate hydrolases"/>
    <property type="match status" value="1"/>
</dbReference>
<dbReference type="PROSITE" id="PS00721">
    <property type="entry name" value="FTHFS_1"/>
    <property type="match status" value="1"/>
</dbReference>
<dbReference type="PROSITE" id="PS00722">
    <property type="entry name" value="FTHFS_2"/>
    <property type="match status" value="1"/>
</dbReference>
<organism>
    <name type="scientific">Alkaliphilus oremlandii (strain OhILAs)</name>
    <name type="common">Clostridium oremlandii (strain OhILAs)</name>
    <dbReference type="NCBI Taxonomy" id="350688"/>
    <lineage>
        <taxon>Bacteria</taxon>
        <taxon>Bacillati</taxon>
        <taxon>Bacillota</taxon>
        <taxon>Clostridia</taxon>
        <taxon>Peptostreptococcales</taxon>
        <taxon>Natronincolaceae</taxon>
        <taxon>Alkaliphilus</taxon>
    </lineage>
</organism>
<sequence>MKTDVQIAQEAKMLPIADIAAGLGIQDDELELYGKYKAKVSLDVFDRLKDKPDGKLILVTAINPTPAGEGKTTTNVGLSMGLNKIGKKTITALREPSLGPNFGVKGGAAGGGYAQVVPMEDINLHFTGDIHAITTAHNLLAALLDNHLHQGNKLNIDSRRIVWRRVLDMNDRALRNTVIGLGSRGDGVPRQDGFDITVASEIMAILCLSNSLEDLKDRISRMVVAYNLDNQPITVNDLEATGALSLLLKDAIKPNLVQTLENTPAFIHGGPFANIAHGCNSVLATKLGLKLADYVVTEAGFGADLGAEKFFDIKCRFAGLKPDCAVIVATVRALKNHGGVPKAELNNENLEALEKGYRNLEKHIENVQKFGVPAVVAINKFPTDTEAELNFLRKHCAEMGAEVVLSDVWANGGDGGIEMAKKVVEVVESKESNFKPLYDVNASIVEKINTIAKEVYGADGVDFTKSAQTQIKKYEDLGLDKMPICMAKTQYSLSDDPSLIGRPSGFRITVKEIRLSAGAGFLVALTGDIMVMPGLPKVPAANHMDILESGEIIGLF</sequence>
<keyword id="KW-0067">ATP-binding</keyword>
<keyword id="KW-0436">Ligase</keyword>
<keyword id="KW-0547">Nucleotide-binding</keyword>
<keyword id="KW-0554">One-carbon metabolism</keyword>
<keyword id="KW-1185">Reference proteome</keyword>
<accession>A8MIN1</accession>
<comment type="catalytic activity">
    <reaction evidence="1">
        <text>(6S)-5,6,7,8-tetrahydrofolate + formate + ATP = (6R)-10-formyltetrahydrofolate + ADP + phosphate</text>
        <dbReference type="Rhea" id="RHEA:20221"/>
        <dbReference type="ChEBI" id="CHEBI:15740"/>
        <dbReference type="ChEBI" id="CHEBI:30616"/>
        <dbReference type="ChEBI" id="CHEBI:43474"/>
        <dbReference type="ChEBI" id="CHEBI:57453"/>
        <dbReference type="ChEBI" id="CHEBI:195366"/>
        <dbReference type="ChEBI" id="CHEBI:456216"/>
        <dbReference type="EC" id="6.3.4.3"/>
    </reaction>
</comment>
<comment type="pathway">
    <text evidence="1">One-carbon metabolism; tetrahydrofolate interconversion.</text>
</comment>
<comment type="similarity">
    <text evidence="1">Belongs to the formate--tetrahydrofolate ligase family.</text>
</comment>
<protein>
    <recommendedName>
        <fullName evidence="1">Formate--tetrahydrofolate ligase</fullName>
        <ecNumber evidence="1">6.3.4.3</ecNumber>
    </recommendedName>
    <alternativeName>
        <fullName evidence="1">Formyltetrahydrofolate synthetase</fullName>
        <shortName evidence="1">FHS</shortName>
        <shortName evidence="1">FTHFS</shortName>
    </alternativeName>
</protein>
<gene>
    <name evidence="1" type="primary">fhs</name>
    <name type="ordered locus">Clos_2127</name>
</gene>